<evidence type="ECO:0000255" key="1">
    <source>
        <dbReference type="HAMAP-Rule" id="MF_00409"/>
    </source>
</evidence>
<reference key="1">
    <citation type="submission" date="2007-12" db="EMBL/GenBank/DDBJ databases">
        <title>Brucella suis ATCC 23445 whole genome shotgun sequencing project.</title>
        <authorList>
            <person name="Setubal J.C."/>
            <person name="Bowns C."/>
            <person name="Boyle S."/>
            <person name="Crasta O.R."/>
            <person name="Czar M.J."/>
            <person name="Dharmanolla C."/>
            <person name="Gillespie J.J."/>
            <person name="Kenyon R.W."/>
            <person name="Lu J."/>
            <person name="Mane S."/>
            <person name="Mohapatra S."/>
            <person name="Nagrani S."/>
            <person name="Purkayastha A."/>
            <person name="Rajasimha H.K."/>
            <person name="Shallom J.M."/>
            <person name="Shallom S."/>
            <person name="Shukla M."/>
            <person name="Snyder E.E."/>
            <person name="Sobral B.W."/>
            <person name="Wattam A.R."/>
            <person name="Will R."/>
            <person name="Williams K."/>
            <person name="Yoo H."/>
            <person name="Bruce D."/>
            <person name="Detter C."/>
            <person name="Munk C."/>
            <person name="Brettin T.S."/>
        </authorList>
    </citation>
    <scope>NUCLEOTIDE SEQUENCE [LARGE SCALE GENOMIC DNA]</scope>
    <source>
        <strain>ATCC 23445 / NCTC 10510</strain>
    </source>
</reference>
<sequence length="341" mass="36772">MASEAPPFWWDEPDWRALALAPAAWIYGRVSGRRLIRAVPPRVSLPVLCVGNFTVGGAGKTPTAIAFARGAIARGMKPGIVSRGYGGNYSGLHLVDPGHDGARHVGDEPLLLARHAAVALSPDRVKAAEYLKSLGCDFIIMDDGFQSARLHADFSLLVVDASRGIGNGRVIPAGPLRAPLTDQMRKTDALLCIGKGNGADFVIRQAARAGRPIYHAQLRSSSSATVAGRRWLAFAGIGNPDKFYESVRQAGGEVVETHSFADHYSFEPDDIRGLVDMARRQGLGLITTAKDHVRLATMPGVPPEFLSKLAVLDVDLEFDRTDALDHILDTVVERFKSRLHG</sequence>
<organism>
    <name type="scientific">Brucella suis (strain ATCC 23445 / NCTC 10510)</name>
    <dbReference type="NCBI Taxonomy" id="470137"/>
    <lineage>
        <taxon>Bacteria</taxon>
        <taxon>Pseudomonadati</taxon>
        <taxon>Pseudomonadota</taxon>
        <taxon>Alphaproteobacteria</taxon>
        <taxon>Hyphomicrobiales</taxon>
        <taxon>Brucellaceae</taxon>
        <taxon>Brucella/Ochrobactrum group</taxon>
        <taxon>Brucella</taxon>
    </lineage>
</organism>
<protein>
    <recommendedName>
        <fullName evidence="1">Tetraacyldisaccharide 4'-kinase</fullName>
        <ecNumber evidence="1">2.7.1.130</ecNumber>
    </recommendedName>
    <alternativeName>
        <fullName evidence="1">Lipid A 4'-kinase</fullName>
    </alternativeName>
</protein>
<feature type="chain" id="PRO_1000080462" description="Tetraacyldisaccharide 4'-kinase">
    <location>
        <begin position="1"/>
        <end position="341"/>
    </location>
</feature>
<feature type="binding site" evidence="1">
    <location>
        <begin position="54"/>
        <end position="61"/>
    </location>
    <ligand>
        <name>ATP</name>
        <dbReference type="ChEBI" id="CHEBI:30616"/>
    </ligand>
</feature>
<proteinExistence type="inferred from homology"/>
<name>LPXK_BRUSI</name>
<comment type="function">
    <text evidence="1">Transfers the gamma-phosphate of ATP to the 4'-position of a tetraacyldisaccharide 1-phosphate intermediate (termed DS-1-P) to form tetraacyldisaccharide 1,4'-bis-phosphate (lipid IVA).</text>
</comment>
<comment type="catalytic activity">
    <reaction evidence="1">
        <text>a lipid A disaccharide + ATP = a lipid IVA + ADP + H(+)</text>
        <dbReference type="Rhea" id="RHEA:67840"/>
        <dbReference type="ChEBI" id="CHEBI:15378"/>
        <dbReference type="ChEBI" id="CHEBI:30616"/>
        <dbReference type="ChEBI" id="CHEBI:176343"/>
        <dbReference type="ChEBI" id="CHEBI:176425"/>
        <dbReference type="ChEBI" id="CHEBI:456216"/>
        <dbReference type="EC" id="2.7.1.130"/>
    </reaction>
</comment>
<comment type="pathway">
    <text evidence="1">Glycolipid biosynthesis; lipid IV(A) biosynthesis; lipid IV(A) from (3R)-3-hydroxytetradecanoyl-[acyl-carrier-protein] and UDP-N-acetyl-alpha-D-glucosamine: step 6/6.</text>
</comment>
<comment type="similarity">
    <text evidence="1">Belongs to the LpxK family.</text>
</comment>
<accession>A9WXS0</accession>
<keyword id="KW-0067">ATP-binding</keyword>
<keyword id="KW-0418">Kinase</keyword>
<keyword id="KW-0441">Lipid A biosynthesis</keyword>
<keyword id="KW-0444">Lipid biosynthesis</keyword>
<keyword id="KW-0443">Lipid metabolism</keyword>
<keyword id="KW-0547">Nucleotide-binding</keyword>
<keyword id="KW-0808">Transferase</keyword>
<gene>
    <name evidence="1" type="primary">lpxK</name>
    <name type="ordered locus">BSUIS_B0220</name>
</gene>
<dbReference type="EC" id="2.7.1.130" evidence="1"/>
<dbReference type="EMBL" id="CP000912">
    <property type="protein sequence ID" value="ABY39236.1"/>
    <property type="molecule type" value="Genomic_DNA"/>
</dbReference>
<dbReference type="RefSeq" id="WP_006073337.1">
    <property type="nucleotide sequence ID" value="NC_010167.1"/>
</dbReference>
<dbReference type="SMR" id="A9WXS0"/>
<dbReference type="KEGG" id="bmt:BSUIS_B0220"/>
<dbReference type="HOGENOM" id="CLU_038816_0_0_5"/>
<dbReference type="UniPathway" id="UPA00359">
    <property type="reaction ID" value="UER00482"/>
</dbReference>
<dbReference type="Proteomes" id="UP000008545">
    <property type="component" value="Chromosome II"/>
</dbReference>
<dbReference type="GO" id="GO:0005886">
    <property type="term" value="C:plasma membrane"/>
    <property type="evidence" value="ECO:0007669"/>
    <property type="project" value="TreeGrafter"/>
</dbReference>
<dbReference type="GO" id="GO:0005524">
    <property type="term" value="F:ATP binding"/>
    <property type="evidence" value="ECO:0007669"/>
    <property type="project" value="UniProtKB-UniRule"/>
</dbReference>
<dbReference type="GO" id="GO:0009029">
    <property type="term" value="F:tetraacyldisaccharide 4'-kinase activity"/>
    <property type="evidence" value="ECO:0007669"/>
    <property type="project" value="UniProtKB-UniRule"/>
</dbReference>
<dbReference type="GO" id="GO:0009245">
    <property type="term" value="P:lipid A biosynthetic process"/>
    <property type="evidence" value="ECO:0007669"/>
    <property type="project" value="UniProtKB-UniRule"/>
</dbReference>
<dbReference type="GO" id="GO:0009244">
    <property type="term" value="P:lipopolysaccharide core region biosynthetic process"/>
    <property type="evidence" value="ECO:0007669"/>
    <property type="project" value="TreeGrafter"/>
</dbReference>
<dbReference type="HAMAP" id="MF_00409">
    <property type="entry name" value="LpxK"/>
    <property type="match status" value="1"/>
</dbReference>
<dbReference type="InterPro" id="IPR003758">
    <property type="entry name" value="LpxK"/>
</dbReference>
<dbReference type="InterPro" id="IPR027417">
    <property type="entry name" value="P-loop_NTPase"/>
</dbReference>
<dbReference type="NCBIfam" id="TIGR00682">
    <property type="entry name" value="lpxK"/>
    <property type="match status" value="1"/>
</dbReference>
<dbReference type="PANTHER" id="PTHR42724">
    <property type="entry name" value="TETRAACYLDISACCHARIDE 4'-KINASE"/>
    <property type="match status" value="1"/>
</dbReference>
<dbReference type="PANTHER" id="PTHR42724:SF1">
    <property type="entry name" value="TETRAACYLDISACCHARIDE 4'-KINASE, MITOCHONDRIAL-RELATED"/>
    <property type="match status" value="1"/>
</dbReference>
<dbReference type="Pfam" id="PF02606">
    <property type="entry name" value="LpxK"/>
    <property type="match status" value="1"/>
</dbReference>
<dbReference type="SUPFAM" id="SSF52540">
    <property type="entry name" value="P-loop containing nucleoside triphosphate hydrolases"/>
    <property type="match status" value="1"/>
</dbReference>